<protein>
    <recommendedName>
        <fullName evidence="1">Protein PsbN</fullName>
    </recommendedName>
</protein>
<reference key="1">
    <citation type="journal article" date="1999" name="Proc. Natl. Acad. Sci. U.S.A.">
        <title>The complete chloroplast DNA sequence of the green alga Nephroselmis olivacea: insights into the architecture of ancestral chloroplast genomes.</title>
        <authorList>
            <person name="Turmel M."/>
            <person name="Otis C."/>
            <person name="Lemieux C."/>
        </authorList>
    </citation>
    <scope>NUCLEOTIDE SEQUENCE [LARGE SCALE GENOMIC DNA]</scope>
    <source>
        <strain>NIES-484 / S-N-5-8</strain>
    </source>
</reference>
<feature type="chain" id="PRO_0000207928" description="Protein PsbN">
    <location>
        <begin position="1"/>
        <end position="44"/>
    </location>
</feature>
<feature type="transmembrane region" description="Helical" evidence="1">
    <location>
        <begin position="7"/>
        <end position="29"/>
    </location>
</feature>
<comment type="function">
    <text evidence="1">May play a role in photosystem I and II biogenesis.</text>
</comment>
<comment type="subcellular location">
    <subcellularLocation>
        <location evidence="1">Plastid</location>
        <location evidence="1">Chloroplast thylakoid membrane</location>
        <topology evidence="1">Single-pass membrane protein</topology>
    </subcellularLocation>
</comment>
<comment type="similarity">
    <text evidence="1">Belongs to the PsbN family.</text>
</comment>
<comment type="caution">
    <text evidence="1">Originally thought to be a component of PSII; based on experiments in Synechocystis, N.tabacum and barley, and its absence from PSII in T.elongatus and T.vulcanus, this is probably not true.</text>
</comment>
<name>PSBN_NEPOL</name>
<geneLocation type="chloroplast"/>
<gene>
    <name evidence="1" type="primary">psbN</name>
</gene>
<keyword id="KW-0150">Chloroplast</keyword>
<keyword id="KW-0472">Membrane</keyword>
<keyword id="KW-0934">Plastid</keyword>
<keyword id="KW-0793">Thylakoid</keyword>
<keyword id="KW-0812">Transmembrane</keyword>
<keyword id="KW-1133">Transmembrane helix</keyword>
<sequence>METPALVATVFVSCLVLSITGYSLYIGFGPPSKELRDPFDEHED</sequence>
<proteinExistence type="inferred from homology"/>
<organism>
    <name type="scientific">Nephroselmis olivacea</name>
    <name type="common">Green alga</name>
    <dbReference type="NCBI Taxonomy" id="31312"/>
    <lineage>
        <taxon>Eukaryota</taxon>
        <taxon>Viridiplantae</taxon>
        <taxon>Chlorophyta</taxon>
        <taxon>Nephroselmidophyceae</taxon>
        <taxon>Nephroselmidales</taxon>
        <taxon>Nephroselmidaceae</taxon>
        <taxon>Nephroselmis</taxon>
    </lineage>
</organism>
<dbReference type="EMBL" id="AF137379">
    <property type="protein sequence ID" value="AAD54850.1"/>
    <property type="molecule type" value="Genomic_DNA"/>
</dbReference>
<dbReference type="RefSeq" id="NP_050879.1">
    <property type="nucleotide sequence ID" value="NC_000927.1"/>
</dbReference>
<dbReference type="SMR" id="Q9TKW6"/>
<dbReference type="GeneID" id="802024"/>
<dbReference type="GO" id="GO:0009535">
    <property type="term" value="C:chloroplast thylakoid membrane"/>
    <property type="evidence" value="ECO:0007669"/>
    <property type="project" value="UniProtKB-SubCell"/>
</dbReference>
<dbReference type="GO" id="GO:0015979">
    <property type="term" value="P:photosynthesis"/>
    <property type="evidence" value="ECO:0007669"/>
    <property type="project" value="InterPro"/>
</dbReference>
<dbReference type="HAMAP" id="MF_00293">
    <property type="entry name" value="PSII_PsbN"/>
    <property type="match status" value="1"/>
</dbReference>
<dbReference type="InterPro" id="IPR003398">
    <property type="entry name" value="PSII_PsbN"/>
</dbReference>
<dbReference type="PANTHER" id="PTHR35326">
    <property type="entry name" value="PROTEIN PSBN"/>
    <property type="match status" value="1"/>
</dbReference>
<dbReference type="PANTHER" id="PTHR35326:SF3">
    <property type="entry name" value="PROTEIN PSBN"/>
    <property type="match status" value="1"/>
</dbReference>
<dbReference type="Pfam" id="PF02468">
    <property type="entry name" value="PsbN"/>
    <property type="match status" value="1"/>
</dbReference>
<evidence type="ECO:0000255" key="1">
    <source>
        <dbReference type="HAMAP-Rule" id="MF_00293"/>
    </source>
</evidence>
<accession>Q9TKW6</accession>